<feature type="chain" id="PRO_1000142882" description="Large ribosomal subunit protein uL15">
    <location>
        <begin position="1"/>
        <end position="144"/>
    </location>
</feature>
<feature type="region of interest" description="Disordered" evidence="2">
    <location>
        <begin position="1"/>
        <end position="54"/>
    </location>
</feature>
<feature type="compositionally biased region" description="Gly residues" evidence="2">
    <location>
        <begin position="21"/>
        <end position="31"/>
    </location>
</feature>
<accession>B2U2R9</accession>
<protein>
    <recommendedName>
        <fullName evidence="1">Large ribosomal subunit protein uL15</fullName>
    </recommendedName>
    <alternativeName>
        <fullName evidence="3">50S ribosomal protein L15</fullName>
    </alternativeName>
</protein>
<reference key="1">
    <citation type="submission" date="2008-05" db="EMBL/GenBank/DDBJ databases">
        <title>Complete sequence of Shigella boydii serotype 18 strain BS512.</title>
        <authorList>
            <person name="Rasko D.A."/>
            <person name="Rosovitz M."/>
            <person name="Maurelli A.T."/>
            <person name="Myers G."/>
            <person name="Seshadri R."/>
            <person name="Cer R."/>
            <person name="Jiang L."/>
            <person name="Ravel J."/>
            <person name="Sebastian Y."/>
        </authorList>
    </citation>
    <scope>NUCLEOTIDE SEQUENCE [LARGE SCALE GENOMIC DNA]</scope>
    <source>
        <strain>CDC 3083-94 / BS512</strain>
    </source>
</reference>
<gene>
    <name evidence="1" type="primary">rplO</name>
    <name type="ordered locus">SbBS512_E3686</name>
</gene>
<keyword id="KW-1185">Reference proteome</keyword>
<keyword id="KW-0687">Ribonucleoprotein</keyword>
<keyword id="KW-0689">Ribosomal protein</keyword>
<keyword id="KW-0694">RNA-binding</keyword>
<keyword id="KW-0699">rRNA-binding</keyword>
<name>RL15_SHIB3</name>
<evidence type="ECO:0000255" key="1">
    <source>
        <dbReference type="HAMAP-Rule" id="MF_01341"/>
    </source>
</evidence>
<evidence type="ECO:0000256" key="2">
    <source>
        <dbReference type="SAM" id="MobiDB-lite"/>
    </source>
</evidence>
<evidence type="ECO:0000305" key="3"/>
<proteinExistence type="inferred from homology"/>
<comment type="function">
    <text evidence="1">Binds to the 23S rRNA.</text>
</comment>
<comment type="subunit">
    <text evidence="1">Part of the 50S ribosomal subunit.</text>
</comment>
<comment type="similarity">
    <text evidence="1">Belongs to the universal ribosomal protein uL15 family.</text>
</comment>
<sequence length="144" mass="14966">MRLNTLSPAEGSKKAGKRLGRGIGSGLGKTGGRGHKGQKSRSGGGVRRGFEGGQMPLYRRLPKFGFTSRKAAITAEVRLSDLAKVEGGVVDLNTLKAANIIGIQIEFAKVILAGEVTTPVTVRGLRVTKGARAAIEAAGGKIEE</sequence>
<dbReference type="EMBL" id="CP001063">
    <property type="protein sequence ID" value="ACD08033.1"/>
    <property type="molecule type" value="Genomic_DNA"/>
</dbReference>
<dbReference type="RefSeq" id="WP_001238917.1">
    <property type="nucleotide sequence ID" value="NC_010658.1"/>
</dbReference>
<dbReference type="SMR" id="B2U2R9"/>
<dbReference type="STRING" id="344609.SbBS512_E3686"/>
<dbReference type="GeneID" id="93778686"/>
<dbReference type="KEGG" id="sbc:SbBS512_E3686"/>
<dbReference type="HOGENOM" id="CLU_055188_4_2_6"/>
<dbReference type="Proteomes" id="UP000001030">
    <property type="component" value="Chromosome"/>
</dbReference>
<dbReference type="GO" id="GO:0022625">
    <property type="term" value="C:cytosolic large ribosomal subunit"/>
    <property type="evidence" value="ECO:0007669"/>
    <property type="project" value="TreeGrafter"/>
</dbReference>
<dbReference type="GO" id="GO:0019843">
    <property type="term" value="F:rRNA binding"/>
    <property type="evidence" value="ECO:0007669"/>
    <property type="project" value="UniProtKB-UniRule"/>
</dbReference>
<dbReference type="GO" id="GO:0003735">
    <property type="term" value="F:structural constituent of ribosome"/>
    <property type="evidence" value="ECO:0007669"/>
    <property type="project" value="InterPro"/>
</dbReference>
<dbReference type="GO" id="GO:0006412">
    <property type="term" value="P:translation"/>
    <property type="evidence" value="ECO:0007669"/>
    <property type="project" value="UniProtKB-UniRule"/>
</dbReference>
<dbReference type="FunFam" id="3.100.10.10:FF:000003">
    <property type="entry name" value="50S ribosomal protein L15"/>
    <property type="match status" value="1"/>
</dbReference>
<dbReference type="Gene3D" id="3.100.10.10">
    <property type="match status" value="1"/>
</dbReference>
<dbReference type="HAMAP" id="MF_01341">
    <property type="entry name" value="Ribosomal_uL15"/>
    <property type="match status" value="1"/>
</dbReference>
<dbReference type="InterPro" id="IPR030878">
    <property type="entry name" value="Ribosomal_uL15"/>
</dbReference>
<dbReference type="InterPro" id="IPR021131">
    <property type="entry name" value="Ribosomal_uL15/eL18"/>
</dbReference>
<dbReference type="InterPro" id="IPR036227">
    <property type="entry name" value="Ribosomal_uL15/eL18_sf"/>
</dbReference>
<dbReference type="InterPro" id="IPR005749">
    <property type="entry name" value="Ribosomal_uL15_bac-type"/>
</dbReference>
<dbReference type="InterPro" id="IPR001196">
    <property type="entry name" value="Ribosomal_uL15_CS"/>
</dbReference>
<dbReference type="NCBIfam" id="TIGR01071">
    <property type="entry name" value="rplO_bact"/>
    <property type="match status" value="1"/>
</dbReference>
<dbReference type="PANTHER" id="PTHR12934">
    <property type="entry name" value="50S RIBOSOMAL PROTEIN L15"/>
    <property type="match status" value="1"/>
</dbReference>
<dbReference type="PANTHER" id="PTHR12934:SF11">
    <property type="entry name" value="LARGE RIBOSOMAL SUBUNIT PROTEIN UL15M"/>
    <property type="match status" value="1"/>
</dbReference>
<dbReference type="Pfam" id="PF00828">
    <property type="entry name" value="Ribosomal_L27A"/>
    <property type="match status" value="1"/>
</dbReference>
<dbReference type="SUPFAM" id="SSF52080">
    <property type="entry name" value="Ribosomal proteins L15p and L18e"/>
    <property type="match status" value="1"/>
</dbReference>
<dbReference type="PROSITE" id="PS00475">
    <property type="entry name" value="RIBOSOMAL_L15"/>
    <property type="match status" value="1"/>
</dbReference>
<organism>
    <name type="scientific">Shigella boydii serotype 18 (strain CDC 3083-94 / BS512)</name>
    <dbReference type="NCBI Taxonomy" id="344609"/>
    <lineage>
        <taxon>Bacteria</taxon>
        <taxon>Pseudomonadati</taxon>
        <taxon>Pseudomonadota</taxon>
        <taxon>Gammaproteobacteria</taxon>
        <taxon>Enterobacterales</taxon>
        <taxon>Enterobacteriaceae</taxon>
        <taxon>Shigella</taxon>
    </lineage>
</organism>